<reference key="1">
    <citation type="journal article" date="1997" name="Nature">
        <title>Genomic sequence of a Lyme disease spirochaete, Borrelia burgdorferi.</title>
        <authorList>
            <person name="Fraser C.M."/>
            <person name="Casjens S."/>
            <person name="Huang W.M."/>
            <person name="Sutton G.G."/>
            <person name="Clayton R.A."/>
            <person name="Lathigra R."/>
            <person name="White O."/>
            <person name="Ketchum K.A."/>
            <person name="Dodson R.J."/>
            <person name="Hickey E.K."/>
            <person name="Gwinn M.L."/>
            <person name="Dougherty B.A."/>
            <person name="Tomb J.-F."/>
            <person name="Fleischmann R.D."/>
            <person name="Richardson D.L."/>
            <person name="Peterson J.D."/>
            <person name="Kerlavage A.R."/>
            <person name="Quackenbush J."/>
            <person name="Salzberg S.L."/>
            <person name="Hanson M."/>
            <person name="van Vugt R."/>
            <person name="Palmer N."/>
            <person name="Adams M.D."/>
            <person name="Gocayne J.D."/>
            <person name="Weidman J.F."/>
            <person name="Utterback T.R."/>
            <person name="Watthey L."/>
            <person name="McDonald L.A."/>
            <person name="Artiach P."/>
            <person name="Bowman C."/>
            <person name="Garland S.A."/>
            <person name="Fujii C."/>
            <person name="Cotton M.D."/>
            <person name="Horst K."/>
            <person name="Roberts K.M."/>
            <person name="Hatch B."/>
            <person name="Smith H.O."/>
            <person name="Venter J.C."/>
        </authorList>
    </citation>
    <scope>NUCLEOTIDE SEQUENCE [LARGE SCALE GENOMIC DNA]</scope>
    <source>
        <strain>ATCC 35210 / DSM 4680 / CIP 102532 / B31</strain>
    </source>
</reference>
<name>RL11_BORBU</name>
<evidence type="ECO:0000255" key="1">
    <source>
        <dbReference type="HAMAP-Rule" id="MF_00736"/>
    </source>
</evidence>
<evidence type="ECO:0000305" key="2"/>
<evidence type="ECO:0007829" key="3">
    <source>
        <dbReference type="PDB" id="8FN2"/>
    </source>
</evidence>
<sequence>MAKKKAISWIKLQVPAAQAAPGAKIGQALGPHGVSGPQFVKEFNERTAKMDPGIVVPVIITVYSDKSFSFIVKTPPASILIKKAIGIESGSKKSNTDKVGTISKEKLMEIARIKMSDLNAKSESAAFKIIAGSARSMGVEVEK</sequence>
<gene>
    <name evidence="1" type="primary">rplK</name>
    <name type="ordered locus">BB_0393</name>
</gene>
<protein>
    <recommendedName>
        <fullName evidence="1">Large ribosomal subunit protein uL11</fullName>
    </recommendedName>
    <alternativeName>
        <fullName evidence="2">50S ribosomal protein L11</fullName>
    </alternativeName>
</protein>
<accession>O51354</accession>
<proteinExistence type="evidence at protein level"/>
<feature type="chain" id="PRO_0000104252" description="Large ribosomal subunit protein uL11">
    <location>
        <begin position="1"/>
        <end position="143"/>
    </location>
</feature>
<feature type="helix" evidence="3">
    <location>
        <begin position="77"/>
        <end position="84"/>
    </location>
</feature>
<feature type="turn" evidence="3">
    <location>
        <begin position="94"/>
        <end position="96"/>
    </location>
</feature>
<feature type="strand" evidence="3">
    <location>
        <begin position="100"/>
        <end position="102"/>
    </location>
</feature>
<feature type="helix" evidence="3">
    <location>
        <begin position="104"/>
        <end position="113"/>
    </location>
</feature>
<feature type="helix" evidence="3">
    <location>
        <begin position="114"/>
        <end position="116"/>
    </location>
</feature>
<feature type="helix" evidence="3">
    <location>
        <begin position="123"/>
        <end position="137"/>
    </location>
</feature>
<feature type="strand" evidence="3">
    <location>
        <begin position="139"/>
        <end position="141"/>
    </location>
</feature>
<dbReference type="EMBL" id="AE000783">
    <property type="protein sequence ID" value="AAC66772.1"/>
    <property type="molecule type" value="Genomic_DNA"/>
</dbReference>
<dbReference type="PIR" id="H70148">
    <property type="entry name" value="H70148"/>
</dbReference>
<dbReference type="RefSeq" id="NP_212527.1">
    <property type="nucleotide sequence ID" value="NC_001318.1"/>
</dbReference>
<dbReference type="RefSeq" id="WP_002657853.1">
    <property type="nucleotide sequence ID" value="NC_001318.1"/>
</dbReference>
<dbReference type="PDB" id="8FMW">
    <property type="method" value="EM"/>
    <property type="resolution" value="2.86 A"/>
    <property type="chains" value="AK=5-143"/>
</dbReference>
<dbReference type="PDB" id="8FN2">
    <property type="method" value="EM"/>
    <property type="resolution" value="3.40 A"/>
    <property type="chains" value="K=5-143"/>
</dbReference>
<dbReference type="PDBsum" id="8FMW"/>
<dbReference type="PDBsum" id="8FN2"/>
<dbReference type="EMDB" id="EMD-29298"/>
<dbReference type="EMDB" id="EMD-29304"/>
<dbReference type="SMR" id="O51354"/>
<dbReference type="STRING" id="224326.BB_0393"/>
<dbReference type="PaxDb" id="224326-BB_0393"/>
<dbReference type="EnsemblBacteria" id="AAC66772">
    <property type="protein sequence ID" value="AAC66772"/>
    <property type="gene ID" value="BB_0393"/>
</dbReference>
<dbReference type="GeneID" id="56567821"/>
<dbReference type="KEGG" id="bbu:BB_0393"/>
<dbReference type="PATRIC" id="fig|224326.49.peg.788"/>
<dbReference type="HOGENOM" id="CLU_074237_2_1_12"/>
<dbReference type="OrthoDB" id="9802408at2"/>
<dbReference type="Proteomes" id="UP000001807">
    <property type="component" value="Chromosome"/>
</dbReference>
<dbReference type="GO" id="GO:0005829">
    <property type="term" value="C:cytosol"/>
    <property type="evidence" value="ECO:0000314"/>
    <property type="project" value="CAFA"/>
</dbReference>
<dbReference type="GO" id="GO:0022625">
    <property type="term" value="C:cytosolic large ribosomal subunit"/>
    <property type="evidence" value="ECO:0007669"/>
    <property type="project" value="TreeGrafter"/>
</dbReference>
<dbReference type="GO" id="GO:0070180">
    <property type="term" value="F:large ribosomal subunit rRNA binding"/>
    <property type="evidence" value="ECO:0007669"/>
    <property type="project" value="UniProtKB-UniRule"/>
</dbReference>
<dbReference type="GO" id="GO:0003735">
    <property type="term" value="F:structural constituent of ribosome"/>
    <property type="evidence" value="ECO:0007669"/>
    <property type="project" value="InterPro"/>
</dbReference>
<dbReference type="GO" id="GO:0006412">
    <property type="term" value="P:translation"/>
    <property type="evidence" value="ECO:0007669"/>
    <property type="project" value="UniProtKB-UniRule"/>
</dbReference>
<dbReference type="CDD" id="cd00349">
    <property type="entry name" value="Ribosomal_L11"/>
    <property type="match status" value="1"/>
</dbReference>
<dbReference type="FunFam" id="1.10.10.250:FF:000001">
    <property type="entry name" value="50S ribosomal protein L11"/>
    <property type="match status" value="1"/>
</dbReference>
<dbReference type="FunFam" id="3.30.1550.10:FF:000006">
    <property type="entry name" value="50S ribosomal protein L11"/>
    <property type="match status" value="1"/>
</dbReference>
<dbReference type="Gene3D" id="1.10.10.250">
    <property type="entry name" value="Ribosomal protein L11, C-terminal domain"/>
    <property type="match status" value="1"/>
</dbReference>
<dbReference type="Gene3D" id="3.30.1550.10">
    <property type="entry name" value="Ribosomal protein L11/L12, N-terminal domain"/>
    <property type="match status" value="1"/>
</dbReference>
<dbReference type="HAMAP" id="MF_00736">
    <property type="entry name" value="Ribosomal_uL11"/>
    <property type="match status" value="1"/>
</dbReference>
<dbReference type="InterPro" id="IPR000911">
    <property type="entry name" value="Ribosomal_uL11"/>
</dbReference>
<dbReference type="InterPro" id="IPR006519">
    <property type="entry name" value="Ribosomal_uL11_bac-typ"/>
</dbReference>
<dbReference type="InterPro" id="IPR020783">
    <property type="entry name" value="Ribosomal_uL11_C"/>
</dbReference>
<dbReference type="InterPro" id="IPR036769">
    <property type="entry name" value="Ribosomal_uL11_C_sf"/>
</dbReference>
<dbReference type="InterPro" id="IPR020785">
    <property type="entry name" value="Ribosomal_uL11_CS"/>
</dbReference>
<dbReference type="InterPro" id="IPR020784">
    <property type="entry name" value="Ribosomal_uL11_N"/>
</dbReference>
<dbReference type="InterPro" id="IPR036796">
    <property type="entry name" value="Ribosomal_uL11_N_sf"/>
</dbReference>
<dbReference type="NCBIfam" id="TIGR01632">
    <property type="entry name" value="L11_bact"/>
    <property type="match status" value="1"/>
</dbReference>
<dbReference type="PANTHER" id="PTHR11661">
    <property type="entry name" value="60S RIBOSOMAL PROTEIN L12"/>
    <property type="match status" value="1"/>
</dbReference>
<dbReference type="PANTHER" id="PTHR11661:SF1">
    <property type="entry name" value="LARGE RIBOSOMAL SUBUNIT PROTEIN UL11M"/>
    <property type="match status" value="1"/>
</dbReference>
<dbReference type="Pfam" id="PF00298">
    <property type="entry name" value="Ribosomal_L11"/>
    <property type="match status" value="1"/>
</dbReference>
<dbReference type="Pfam" id="PF03946">
    <property type="entry name" value="Ribosomal_L11_N"/>
    <property type="match status" value="1"/>
</dbReference>
<dbReference type="SMART" id="SM00649">
    <property type="entry name" value="RL11"/>
    <property type="match status" value="1"/>
</dbReference>
<dbReference type="SUPFAM" id="SSF54747">
    <property type="entry name" value="Ribosomal L11/L12e N-terminal domain"/>
    <property type="match status" value="1"/>
</dbReference>
<dbReference type="SUPFAM" id="SSF46906">
    <property type="entry name" value="Ribosomal protein L11, C-terminal domain"/>
    <property type="match status" value="1"/>
</dbReference>
<dbReference type="PROSITE" id="PS00359">
    <property type="entry name" value="RIBOSOMAL_L11"/>
    <property type="match status" value="1"/>
</dbReference>
<organism>
    <name type="scientific">Borreliella burgdorferi (strain ATCC 35210 / DSM 4680 / CIP 102532 / B31)</name>
    <name type="common">Borrelia burgdorferi</name>
    <dbReference type="NCBI Taxonomy" id="224326"/>
    <lineage>
        <taxon>Bacteria</taxon>
        <taxon>Pseudomonadati</taxon>
        <taxon>Spirochaetota</taxon>
        <taxon>Spirochaetia</taxon>
        <taxon>Spirochaetales</taxon>
        <taxon>Borreliaceae</taxon>
        <taxon>Borreliella</taxon>
    </lineage>
</organism>
<comment type="function">
    <text evidence="1">Forms part of the ribosomal stalk which helps the ribosome interact with GTP-bound translation factors.</text>
</comment>
<comment type="subunit">
    <text evidence="1">Part of the ribosomal stalk of the 50S ribosomal subunit. Interacts with L10 and the large rRNA to form the base of the stalk. L10 forms an elongated spine to which L12 dimers bind in a sequential fashion forming a multimeric L10(L12)X complex.</text>
</comment>
<comment type="PTM">
    <text evidence="1">One or more lysine residues are methylated.</text>
</comment>
<comment type="similarity">
    <text evidence="1">Belongs to the universal ribosomal protein uL11 family.</text>
</comment>
<keyword id="KW-0002">3D-structure</keyword>
<keyword id="KW-0488">Methylation</keyword>
<keyword id="KW-1185">Reference proteome</keyword>
<keyword id="KW-0687">Ribonucleoprotein</keyword>
<keyword id="KW-0689">Ribosomal protein</keyword>
<keyword id="KW-0694">RNA-binding</keyword>
<keyword id="KW-0699">rRNA-binding</keyword>